<accession>A7HM41</accession>
<keyword id="KW-1185">Reference proteome</keyword>
<keyword id="KW-0687">Ribonucleoprotein</keyword>
<keyword id="KW-0689">Ribosomal protein</keyword>
<keyword id="KW-0694">RNA-binding</keyword>
<keyword id="KW-0699">rRNA-binding</keyword>
<protein>
    <recommendedName>
        <fullName evidence="1">Large ribosomal subunit protein uL24</fullName>
    </recommendedName>
    <alternativeName>
        <fullName evidence="2">50S ribosomal protein L24</fullName>
    </alternativeName>
</protein>
<organism>
    <name type="scientific">Fervidobacterium nodosum (strain ATCC 35602 / DSM 5306 / Rt17-B1)</name>
    <dbReference type="NCBI Taxonomy" id="381764"/>
    <lineage>
        <taxon>Bacteria</taxon>
        <taxon>Thermotogati</taxon>
        <taxon>Thermotogota</taxon>
        <taxon>Thermotogae</taxon>
        <taxon>Thermotogales</taxon>
        <taxon>Fervidobacteriaceae</taxon>
        <taxon>Fervidobacterium</taxon>
    </lineage>
</organism>
<dbReference type="EMBL" id="CP000771">
    <property type="protein sequence ID" value="ABS60974.1"/>
    <property type="molecule type" value="Genomic_DNA"/>
</dbReference>
<dbReference type="RefSeq" id="WP_011994287.1">
    <property type="nucleotide sequence ID" value="NC_009718.1"/>
</dbReference>
<dbReference type="SMR" id="A7HM41"/>
<dbReference type="STRING" id="381764.Fnod_1127"/>
<dbReference type="KEGG" id="fno:Fnod_1127"/>
<dbReference type="eggNOG" id="COG0198">
    <property type="taxonomic scope" value="Bacteria"/>
</dbReference>
<dbReference type="HOGENOM" id="CLU_093315_2_0_0"/>
<dbReference type="OrthoDB" id="9807419at2"/>
<dbReference type="Proteomes" id="UP000002415">
    <property type="component" value="Chromosome"/>
</dbReference>
<dbReference type="GO" id="GO:1990904">
    <property type="term" value="C:ribonucleoprotein complex"/>
    <property type="evidence" value="ECO:0007669"/>
    <property type="project" value="UniProtKB-KW"/>
</dbReference>
<dbReference type="GO" id="GO:0005840">
    <property type="term" value="C:ribosome"/>
    <property type="evidence" value="ECO:0007669"/>
    <property type="project" value="UniProtKB-KW"/>
</dbReference>
<dbReference type="GO" id="GO:0019843">
    <property type="term" value="F:rRNA binding"/>
    <property type="evidence" value="ECO:0007669"/>
    <property type="project" value="UniProtKB-UniRule"/>
</dbReference>
<dbReference type="GO" id="GO:0003735">
    <property type="term" value="F:structural constituent of ribosome"/>
    <property type="evidence" value="ECO:0007669"/>
    <property type="project" value="InterPro"/>
</dbReference>
<dbReference type="GO" id="GO:0006412">
    <property type="term" value="P:translation"/>
    <property type="evidence" value="ECO:0007669"/>
    <property type="project" value="UniProtKB-UniRule"/>
</dbReference>
<dbReference type="CDD" id="cd06089">
    <property type="entry name" value="KOW_RPL26"/>
    <property type="match status" value="1"/>
</dbReference>
<dbReference type="FunFam" id="2.30.30.30:FF:000004">
    <property type="entry name" value="50S ribosomal protein L24"/>
    <property type="match status" value="1"/>
</dbReference>
<dbReference type="Gene3D" id="2.30.30.30">
    <property type="match status" value="1"/>
</dbReference>
<dbReference type="HAMAP" id="MF_01326_B">
    <property type="entry name" value="Ribosomal_uL24_B"/>
    <property type="match status" value="1"/>
</dbReference>
<dbReference type="InterPro" id="IPR005824">
    <property type="entry name" value="KOW"/>
</dbReference>
<dbReference type="InterPro" id="IPR014722">
    <property type="entry name" value="Rib_uL2_dom2"/>
</dbReference>
<dbReference type="InterPro" id="IPR003256">
    <property type="entry name" value="Ribosomal_uL24"/>
</dbReference>
<dbReference type="InterPro" id="IPR005825">
    <property type="entry name" value="Ribosomal_uL24_CS"/>
</dbReference>
<dbReference type="InterPro" id="IPR041988">
    <property type="entry name" value="Ribosomal_uL24_KOW"/>
</dbReference>
<dbReference type="InterPro" id="IPR008991">
    <property type="entry name" value="Translation_prot_SH3-like_sf"/>
</dbReference>
<dbReference type="NCBIfam" id="TIGR01079">
    <property type="entry name" value="rplX_bact"/>
    <property type="match status" value="1"/>
</dbReference>
<dbReference type="PANTHER" id="PTHR12903">
    <property type="entry name" value="MITOCHONDRIAL RIBOSOMAL PROTEIN L24"/>
    <property type="match status" value="1"/>
</dbReference>
<dbReference type="Pfam" id="PF00467">
    <property type="entry name" value="KOW"/>
    <property type="match status" value="1"/>
</dbReference>
<dbReference type="Pfam" id="PF17136">
    <property type="entry name" value="ribosomal_L24"/>
    <property type="match status" value="1"/>
</dbReference>
<dbReference type="SMART" id="SM00739">
    <property type="entry name" value="KOW"/>
    <property type="match status" value="1"/>
</dbReference>
<dbReference type="SUPFAM" id="SSF50104">
    <property type="entry name" value="Translation proteins SH3-like domain"/>
    <property type="match status" value="1"/>
</dbReference>
<dbReference type="PROSITE" id="PS01108">
    <property type="entry name" value="RIBOSOMAL_L24"/>
    <property type="match status" value="1"/>
</dbReference>
<reference key="1">
    <citation type="submission" date="2007-07" db="EMBL/GenBank/DDBJ databases">
        <title>Complete sequence of Fervidobacterium nodosum Rt17-B1.</title>
        <authorList>
            <consortium name="US DOE Joint Genome Institute"/>
            <person name="Copeland A."/>
            <person name="Lucas S."/>
            <person name="Lapidus A."/>
            <person name="Barry K."/>
            <person name="Glavina del Rio T."/>
            <person name="Dalin E."/>
            <person name="Tice H."/>
            <person name="Pitluck S."/>
            <person name="Saunders E."/>
            <person name="Brettin T."/>
            <person name="Bruce D."/>
            <person name="Detter J.C."/>
            <person name="Han C."/>
            <person name="Schmutz J."/>
            <person name="Larimer F."/>
            <person name="Land M."/>
            <person name="Hauser L."/>
            <person name="Kyrpides N."/>
            <person name="Mikhailova N."/>
            <person name="Nelson K."/>
            <person name="Gogarten J.P."/>
            <person name="Noll K."/>
            <person name="Richardson P."/>
        </authorList>
    </citation>
    <scope>NUCLEOTIDE SEQUENCE [LARGE SCALE GENOMIC DNA]</scope>
    <source>
        <strain>ATCC 35602 / DSM 5306 / Rt17-B1</strain>
    </source>
</reference>
<comment type="function">
    <text evidence="1">One of two assembly initiator proteins, it binds directly to the 5'-end of the 23S rRNA, where it nucleates assembly of the 50S subunit.</text>
</comment>
<comment type="function">
    <text evidence="1">One of the proteins that surrounds the polypeptide exit tunnel on the outside of the subunit.</text>
</comment>
<comment type="subunit">
    <text evidence="1">Part of the 50S ribosomal subunit.</text>
</comment>
<comment type="similarity">
    <text evidence="1">Belongs to the universal ribosomal protein uL24 family.</text>
</comment>
<sequence>MAQKIKKGDTVQVISGKDKGKRGEVIQVLPKEEKLIVRGVNIVKRHQRPTGQMRQGGIIEKEAPLYWSKVMLVCPSCDKATRVGFRVLEDGSKVRYCKKCGEIIDKK</sequence>
<feature type="chain" id="PRO_0000355680" description="Large ribosomal subunit protein uL24">
    <location>
        <begin position="1"/>
        <end position="107"/>
    </location>
</feature>
<name>RL24_FERNB</name>
<evidence type="ECO:0000255" key="1">
    <source>
        <dbReference type="HAMAP-Rule" id="MF_01326"/>
    </source>
</evidence>
<evidence type="ECO:0000305" key="2"/>
<proteinExistence type="inferred from homology"/>
<gene>
    <name evidence="1" type="primary">rplX</name>
    <name type="ordered locus">Fnod_1127</name>
</gene>